<comment type="function">
    <text evidence="1">Inhibits cell growth by regulating the TOR signaling pathway upstream of the TSC1-TSC2 complex and downstream of AKT1.</text>
</comment>
<comment type="subcellular location">
    <subcellularLocation>
        <location evidence="1">Cytoplasm</location>
    </subcellularLocation>
</comment>
<comment type="similarity">
    <text evidence="2">Belongs to the DDIT4 family.</text>
</comment>
<evidence type="ECO:0000250" key="1"/>
<evidence type="ECO:0000305" key="2"/>
<sequence length="193" mass="21581">MVATGSLSSKNPASISELLDGGYHPGSLLSDFDYWDYVVPEPNLNEVVFEETTCQNLVKMLENCLSRSKQTKLGCSKVLVPEKLTQRIAQDVLRLSSTEPCGLRGCVMHVNLEIENVCKKLDRIVCDASVVPTFELTLVFKQESCPWTSLKDFFFSRGRFSSGLKRTLILSSGFRLVKKKLYSLIGTTVIEEC</sequence>
<proteinExistence type="evidence at transcript level"/>
<feature type="chain" id="PRO_0000307205" description="DNA damage-inducible transcript 4-like protein">
    <location>
        <begin position="1"/>
        <end position="193"/>
    </location>
</feature>
<feature type="sequence conflict" description="In Ref. 1; AAL39013." evidence="2" ref="1">
    <original>L</original>
    <variation>M</variation>
    <location>
        <position position="28"/>
    </location>
</feature>
<feature type="sequence conflict" description="In Ref. 3; BAB24676/BAB31490." evidence="2" ref="3">
    <original>F</original>
    <variation>Y</variation>
    <location>
        <position position="174"/>
    </location>
</feature>
<protein>
    <recommendedName>
        <fullName>DNA damage-inducible transcript 4-like protein</fullName>
    </recommendedName>
    <alternativeName>
        <fullName>HIF-1 responsive protein RTP801-like</fullName>
    </alternativeName>
    <alternativeName>
        <fullName>Soleus muscle atrophied after hindlimb suspension protein 1</fullName>
    </alternativeName>
</protein>
<keyword id="KW-0963">Cytoplasm</keyword>
<keyword id="KW-1185">Reference proteome</keyword>
<reference key="1">
    <citation type="journal article" date="2001" name="J. Cell. Biochem.">
        <title>Analysis of altered gene expression in rat soleus muscle atrophied by disuse.</title>
        <authorList>
            <person name="Cros N."/>
            <person name="Tkatchenko A.V."/>
            <person name="Pisani D.F."/>
            <person name="Leclerc L."/>
            <person name="Leger J.J."/>
            <person name="Marini J.-F."/>
            <person name="Dechesne C.A."/>
        </authorList>
    </citation>
    <scope>NUCLEOTIDE SEQUENCE [MRNA]</scope>
    <source>
        <strain>C57BL/10ScNJ</strain>
        <tissue>Skeletal muscle</tissue>
    </source>
</reference>
<reference key="2">
    <citation type="journal article" date="2002" name="Mol. Cell. Biol.">
        <title>Identification of a novel hypoxia-inducible factor 1-responsive gene, RTP801, involved in apoptosis.</title>
        <authorList>
            <person name="Shoshani T."/>
            <person name="Faerman A."/>
            <person name="Mett I."/>
            <person name="Zelin E."/>
            <person name="Tenne T."/>
            <person name="Gorodin S."/>
            <person name="Moshel Y."/>
            <person name="Elbaz S."/>
            <person name="Budanov A."/>
            <person name="Chajut A."/>
            <person name="Kalinski H."/>
            <person name="Kamer I."/>
            <person name="Rozen A."/>
            <person name="Mor O."/>
            <person name="Keshet E."/>
            <person name="Leshkowitz D."/>
            <person name="Einat P."/>
            <person name="Skaliter R."/>
            <person name="Feinstein E."/>
        </authorList>
    </citation>
    <scope>NUCLEOTIDE SEQUENCE [MRNA]</scope>
</reference>
<reference key="3">
    <citation type="journal article" date="2005" name="Science">
        <title>The transcriptional landscape of the mammalian genome.</title>
        <authorList>
            <person name="Carninci P."/>
            <person name="Kasukawa T."/>
            <person name="Katayama S."/>
            <person name="Gough J."/>
            <person name="Frith M.C."/>
            <person name="Maeda N."/>
            <person name="Oyama R."/>
            <person name="Ravasi T."/>
            <person name="Lenhard B."/>
            <person name="Wells C."/>
            <person name="Kodzius R."/>
            <person name="Shimokawa K."/>
            <person name="Bajic V.B."/>
            <person name="Brenner S.E."/>
            <person name="Batalov S."/>
            <person name="Forrest A.R."/>
            <person name="Zavolan M."/>
            <person name="Davis M.J."/>
            <person name="Wilming L.G."/>
            <person name="Aidinis V."/>
            <person name="Allen J.E."/>
            <person name="Ambesi-Impiombato A."/>
            <person name="Apweiler R."/>
            <person name="Aturaliya R.N."/>
            <person name="Bailey T.L."/>
            <person name="Bansal M."/>
            <person name="Baxter L."/>
            <person name="Beisel K.W."/>
            <person name="Bersano T."/>
            <person name="Bono H."/>
            <person name="Chalk A.M."/>
            <person name="Chiu K.P."/>
            <person name="Choudhary V."/>
            <person name="Christoffels A."/>
            <person name="Clutterbuck D.R."/>
            <person name="Crowe M.L."/>
            <person name="Dalla E."/>
            <person name="Dalrymple B.P."/>
            <person name="de Bono B."/>
            <person name="Della Gatta G."/>
            <person name="di Bernardo D."/>
            <person name="Down T."/>
            <person name="Engstrom P."/>
            <person name="Fagiolini M."/>
            <person name="Faulkner G."/>
            <person name="Fletcher C.F."/>
            <person name="Fukushima T."/>
            <person name="Furuno M."/>
            <person name="Futaki S."/>
            <person name="Gariboldi M."/>
            <person name="Georgii-Hemming P."/>
            <person name="Gingeras T.R."/>
            <person name="Gojobori T."/>
            <person name="Green R.E."/>
            <person name="Gustincich S."/>
            <person name="Harbers M."/>
            <person name="Hayashi Y."/>
            <person name="Hensch T.K."/>
            <person name="Hirokawa N."/>
            <person name="Hill D."/>
            <person name="Huminiecki L."/>
            <person name="Iacono M."/>
            <person name="Ikeo K."/>
            <person name="Iwama A."/>
            <person name="Ishikawa T."/>
            <person name="Jakt M."/>
            <person name="Kanapin A."/>
            <person name="Katoh M."/>
            <person name="Kawasawa Y."/>
            <person name="Kelso J."/>
            <person name="Kitamura H."/>
            <person name="Kitano H."/>
            <person name="Kollias G."/>
            <person name="Krishnan S.P."/>
            <person name="Kruger A."/>
            <person name="Kummerfeld S.K."/>
            <person name="Kurochkin I.V."/>
            <person name="Lareau L.F."/>
            <person name="Lazarevic D."/>
            <person name="Lipovich L."/>
            <person name="Liu J."/>
            <person name="Liuni S."/>
            <person name="McWilliam S."/>
            <person name="Madan Babu M."/>
            <person name="Madera M."/>
            <person name="Marchionni L."/>
            <person name="Matsuda H."/>
            <person name="Matsuzawa S."/>
            <person name="Miki H."/>
            <person name="Mignone F."/>
            <person name="Miyake S."/>
            <person name="Morris K."/>
            <person name="Mottagui-Tabar S."/>
            <person name="Mulder N."/>
            <person name="Nakano N."/>
            <person name="Nakauchi H."/>
            <person name="Ng P."/>
            <person name="Nilsson R."/>
            <person name="Nishiguchi S."/>
            <person name="Nishikawa S."/>
            <person name="Nori F."/>
            <person name="Ohara O."/>
            <person name="Okazaki Y."/>
            <person name="Orlando V."/>
            <person name="Pang K.C."/>
            <person name="Pavan W.J."/>
            <person name="Pavesi G."/>
            <person name="Pesole G."/>
            <person name="Petrovsky N."/>
            <person name="Piazza S."/>
            <person name="Reed J."/>
            <person name="Reid J.F."/>
            <person name="Ring B.Z."/>
            <person name="Ringwald M."/>
            <person name="Rost B."/>
            <person name="Ruan Y."/>
            <person name="Salzberg S.L."/>
            <person name="Sandelin A."/>
            <person name="Schneider C."/>
            <person name="Schoenbach C."/>
            <person name="Sekiguchi K."/>
            <person name="Semple C.A."/>
            <person name="Seno S."/>
            <person name="Sessa L."/>
            <person name="Sheng Y."/>
            <person name="Shibata Y."/>
            <person name="Shimada H."/>
            <person name="Shimada K."/>
            <person name="Silva D."/>
            <person name="Sinclair B."/>
            <person name="Sperling S."/>
            <person name="Stupka E."/>
            <person name="Sugiura K."/>
            <person name="Sultana R."/>
            <person name="Takenaka Y."/>
            <person name="Taki K."/>
            <person name="Tammoja K."/>
            <person name="Tan S.L."/>
            <person name="Tang S."/>
            <person name="Taylor M.S."/>
            <person name="Tegner J."/>
            <person name="Teichmann S.A."/>
            <person name="Ueda H.R."/>
            <person name="van Nimwegen E."/>
            <person name="Verardo R."/>
            <person name="Wei C.L."/>
            <person name="Yagi K."/>
            <person name="Yamanishi H."/>
            <person name="Zabarovsky E."/>
            <person name="Zhu S."/>
            <person name="Zimmer A."/>
            <person name="Hide W."/>
            <person name="Bult C."/>
            <person name="Grimmond S.M."/>
            <person name="Teasdale R.D."/>
            <person name="Liu E.T."/>
            <person name="Brusic V."/>
            <person name="Quackenbush J."/>
            <person name="Wahlestedt C."/>
            <person name="Mattick J.S."/>
            <person name="Hume D.A."/>
            <person name="Kai C."/>
            <person name="Sasaki D."/>
            <person name="Tomaru Y."/>
            <person name="Fukuda S."/>
            <person name="Kanamori-Katayama M."/>
            <person name="Suzuki M."/>
            <person name="Aoki J."/>
            <person name="Arakawa T."/>
            <person name="Iida J."/>
            <person name="Imamura K."/>
            <person name="Itoh M."/>
            <person name="Kato T."/>
            <person name="Kawaji H."/>
            <person name="Kawagashira N."/>
            <person name="Kawashima T."/>
            <person name="Kojima M."/>
            <person name="Kondo S."/>
            <person name="Konno H."/>
            <person name="Nakano K."/>
            <person name="Ninomiya N."/>
            <person name="Nishio T."/>
            <person name="Okada M."/>
            <person name="Plessy C."/>
            <person name="Shibata K."/>
            <person name="Shiraki T."/>
            <person name="Suzuki S."/>
            <person name="Tagami M."/>
            <person name="Waki K."/>
            <person name="Watahiki A."/>
            <person name="Okamura-Oho Y."/>
            <person name="Suzuki H."/>
            <person name="Kawai J."/>
            <person name="Hayashizaki Y."/>
        </authorList>
    </citation>
    <scope>NUCLEOTIDE SEQUENCE [LARGE SCALE MRNA]</scope>
    <source>
        <strain>C57BL/6J</strain>
        <tissue>Eye</tissue>
        <tissue>Head</tissue>
        <tissue>Testis</tissue>
    </source>
</reference>
<reference key="4">
    <citation type="journal article" date="2004" name="Genome Res.">
        <title>The status, quality, and expansion of the NIH full-length cDNA project: the Mammalian Gene Collection (MGC).</title>
        <authorList>
            <consortium name="The MGC Project Team"/>
        </authorList>
    </citation>
    <scope>NUCLEOTIDE SEQUENCE [LARGE SCALE MRNA]</scope>
    <source>
        <strain>Czech II</strain>
        <tissue>Lung</tissue>
    </source>
</reference>
<accession>Q8VHZ5</accession>
<accession>Q8C0Z7</accession>
<accession>Q8VD49</accession>
<accession>Q9CQV2</accession>
<dbReference type="EMBL" id="AF327512">
    <property type="protein sequence ID" value="AAL39013.1"/>
    <property type="molecule type" value="mRNA"/>
</dbReference>
<dbReference type="EMBL" id="AF335325">
    <property type="protein sequence ID" value="AAL38425.1"/>
    <property type="molecule type" value="mRNA"/>
</dbReference>
<dbReference type="EMBL" id="AK006617">
    <property type="protein sequence ID" value="BAB24676.1"/>
    <property type="molecule type" value="mRNA"/>
</dbReference>
<dbReference type="EMBL" id="AK018944">
    <property type="protein sequence ID" value="BAB31490.1"/>
    <property type="molecule type" value="mRNA"/>
</dbReference>
<dbReference type="EMBL" id="AK029362">
    <property type="protein sequence ID" value="BAC26417.1"/>
    <property type="molecule type" value="mRNA"/>
</dbReference>
<dbReference type="EMBL" id="AK053333">
    <property type="protein sequence ID" value="BAC35350.1"/>
    <property type="molecule type" value="mRNA"/>
</dbReference>
<dbReference type="EMBL" id="BC038131">
    <property type="protein sequence ID" value="AAH38131.1"/>
    <property type="molecule type" value="mRNA"/>
</dbReference>
<dbReference type="CCDS" id="CCDS17863.1"/>
<dbReference type="RefSeq" id="NP_084419.2">
    <property type="nucleotide sequence ID" value="NM_030143.4"/>
</dbReference>
<dbReference type="SMR" id="Q8VHZ5"/>
<dbReference type="BioGRID" id="215892">
    <property type="interactions" value="1"/>
</dbReference>
<dbReference type="FunCoup" id="Q8VHZ5">
    <property type="interactions" value="69"/>
</dbReference>
<dbReference type="IntAct" id="Q8VHZ5">
    <property type="interactions" value="2"/>
</dbReference>
<dbReference type="MINT" id="Q8VHZ5"/>
<dbReference type="STRING" id="10090.ENSMUSP00000058896"/>
<dbReference type="iPTMnet" id="Q8VHZ5"/>
<dbReference type="PhosphoSitePlus" id="Q8VHZ5"/>
<dbReference type="PaxDb" id="10090-ENSMUSP00000058896"/>
<dbReference type="ProteomicsDB" id="279321"/>
<dbReference type="Antibodypedia" id="25978">
    <property type="antibodies" value="242 antibodies from 22 providers"/>
</dbReference>
<dbReference type="DNASU" id="73284"/>
<dbReference type="Ensembl" id="ENSMUST00000053855.8">
    <property type="protein sequence ID" value="ENSMUSP00000058896.8"/>
    <property type="gene ID" value="ENSMUSG00000046818.8"/>
</dbReference>
<dbReference type="GeneID" id="73284"/>
<dbReference type="KEGG" id="mmu:73284"/>
<dbReference type="UCSC" id="uc008rmn.2">
    <property type="organism name" value="mouse"/>
</dbReference>
<dbReference type="AGR" id="MGI:1920534"/>
<dbReference type="CTD" id="115265"/>
<dbReference type="MGI" id="MGI:1920534">
    <property type="gene designation" value="Ddit4l"/>
</dbReference>
<dbReference type="VEuPathDB" id="HostDB:ENSMUSG00000046818"/>
<dbReference type="eggNOG" id="ENOG502R3EE">
    <property type="taxonomic scope" value="Eukaryota"/>
</dbReference>
<dbReference type="GeneTree" id="ENSGT00530000063652"/>
<dbReference type="HOGENOM" id="CLU_086145_0_0_1"/>
<dbReference type="InParanoid" id="Q8VHZ5"/>
<dbReference type="OMA" id="VFKQDNC"/>
<dbReference type="OrthoDB" id="10018535at2759"/>
<dbReference type="PhylomeDB" id="Q8VHZ5"/>
<dbReference type="TreeFam" id="TF105007"/>
<dbReference type="BioGRID-ORCS" id="73284">
    <property type="hits" value="2 hits in 78 CRISPR screens"/>
</dbReference>
<dbReference type="ChiTaRS" id="Ddit4l">
    <property type="organism name" value="mouse"/>
</dbReference>
<dbReference type="PRO" id="PR:Q8VHZ5"/>
<dbReference type="Proteomes" id="UP000000589">
    <property type="component" value="Chromosome 3"/>
</dbReference>
<dbReference type="RNAct" id="Q8VHZ5">
    <property type="molecule type" value="protein"/>
</dbReference>
<dbReference type="Bgee" id="ENSMUSG00000046818">
    <property type="expression patterns" value="Expressed in temporalis muscle and 211 other cell types or tissues"/>
</dbReference>
<dbReference type="ExpressionAtlas" id="Q8VHZ5">
    <property type="expression patterns" value="baseline and differential"/>
</dbReference>
<dbReference type="GO" id="GO:0005737">
    <property type="term" value="C:cytoplasm"/>
    <property type="evidence" value="ECO:0000250"/>
    <property type="project" value="UniProtKB"/>
</dbReference>
<dbReference type="GO" id="GO:0009968">
    <property type="term" value="P:negative regulation of signal transduction"/>
    <property type="evidence" value="ECO:0007669"/>
    <property type="project" value="InterPro"/>
</dbReference>
<dbReference type="FunFam" id="3.90.470.40:FF:000002">
    <property type="entry name" value="DNA damage-inducible transcript 4-like protein"/>
    <property type="match status" value="1"/>
</dbReference>
<dbReference type="Gene3D" id="3.90.470.40">
    <property type="entry name" value="RTP801-like"/>
    <property type="match status" value="1"/>
</dbReference>
<dbReference type="InterPro" id="IPR012918">
    <property type="entry name" value="RTP801-like"/>
</dbReference>
<dbReference type="InterPro" id="IPR038281">
    <property type="entry name" value="RTP801-like_C_sf"/>
</dbReference>
<dbReference type="PANTHER" id="PTHR12478:SF17">
    <property type="entry name" value="DNA DAMAGE-INDUCIBLE TRANSCRIPT 4-LIKE PROTEIN"/>
    <property type="match status" value="1"/>
</dbReference>
<dbReference type="PANTHER" id="PTHR12478">
    <property type="entry name" value="DNA-DAMAGE-INDUCIBLE TRANSCRIPT 4 PROTEIN DDIT4"/>
    <property type="match status" value="1"/>
</dbReference>
<dbReference type="Pfam" id="PF07809">
    <property type="entry name" value="RTP801_C"/>
    <property type="match status" value="1"/>
</dbReference>
<organism>
    <name type="scientific">Mus musculus</name>
    <name type="common">Mouse</name>
    <dbReference type="NCBI Taxonomy" id="10090"/>
    <lineage>
        <taxon>Eukaryota</taxon>
        <taxon>Metazoa</taxon>
        <taxon>Chordata</taxon>
        <taxon>Craniata</taxon>
        <taxon>Vertebrata</taxon>
        <taxon>Euteleostomi</taxon>
        <taxon>Mammalia</taxon>
        <taxon>Eutheria</taxon>
        <taxon>Euarchontoglires</taxon>
        <taxon>Glires</taxon>
        <taxon>Rodentia</taxon>
        <taxon>Myomorpha</taxon>
        <taxon>Muroidea</taxon>
        <taxon>Muridae</taxon>
        <taxon>Murinae</taxon>
        <taxon>Mus</taxon>
        <taxon>Mus</taxon>
    </lineage>
</organism>
<name>DDT4L_MOUSE</name>
<gene>
    <name type="primary">Ddit4l</name>
    <name type="synonym">Rtp801l</name>
    <name type="synonym">Smhs1</name>
</gene>